<organism>
    <name type="scientific">Human papillomavirus 12</name>
    <dbReference type="NCBI Taxonomy" id="10604"/>
    <lineage>
        <taxon>Viruses</taxon>
        <taxon>Monodnaviria</taxon>
        <taxon>Shotokuvirae</taxon>
        <taxon>Cossaviricota</taxon>
        <taxon>Papovaviricetes</taxon>
        <taxon>Zurhausenvirales</taxon>
        <taxon>Papillomaviridae</taxon>
        <taxon>Firstpapillomavirinae</taxon>
        <taxon>Betapapillomavirus</taxon>
        <taxon>Betapapillomavirus 1</taxon>
    </lineage>
</organism>
<feature type="chain" id="PRO_0000133496" description="Major capsid protein L1">
    <location>
        <begin position="1"/>
        <end position="517"/>
    </location>
</feature>
<feature type="region of interest" description="Disordered" evidence="2">
    <location>
        <begin position="497"/>
        <end position="517"/>
    </location>
</feature>
<feature type="compositionally biased region" description="Polar residues" evidence="2">
    <location>
        <begin position="497"/>
        <end position="509"/>
    </location>
</feature>
<feature type="disulfide bond" description="Interchain (with C-444)" evidence="1">
    <location>
        <position position="175"/>
    </location>
</feature>
<feature type="disulfide bond" description="Interchain (with C-175)" evidence="1">
    <location>
        <position position="444"/>
    </location>
</feature>
<organismHost>
    <name type="scientific">Homo sapiens</name>
    <name type="common">Human</name>
    <dbReference type="NCBI Taxonomy" id="9606"/>
</organismHost>
<name>VL1_HPV12</name>
<proteinExistence type="inferred from homology"/>
<sequence>MAVWQAAHGKVYLPPSTPVARVQSTDEYIQRTNIYYHANTDRLLTVGHPYFNVYDNTGKKLEVPKVSGNQHRVFRLKLPDPNRFALADMSVYNPDRERLVWACRGLEISRGQPLGVGSTGHPYFNKIKDTENSNNYATGSKDDRQNTSFDPKQIQMFIVGCTPCVGEHWEKALPCGDAPAENGVCPPIELKNTFIEDGDMADIGFGNMNFKTLQQNRSDVSLDIVNETCKYPDFLKMQNDVYGDACFFYARREQCYARHFFVRGGKTGDDIPDAQIDDGNMKNQYYIPGAQDQSQKDIGNAMYFPTVSGSLVSSDAQLFNRPFWLQRAQGHNNGILWANQMFVTVVDNTRNTNFSISIYSDNQNVHDIPNYDSQKFREYLRHVEEYEISLILQLCKVPLKAEVLAQINAMNSSLLEDWQLGFVPTPDNPIHDTYRYIESLATRCPDKNPPKEKPDPYDGLSFWTVDMTERLSLDLDQYSLGRKFLFQAGLQQTTVNGTTKSSSYRSSIRGTKRKRKN</sequence>
<reference key="1">
    <citation type="journal article" date="1994" name="Curr. Top. Microbiol. Immunol.">
        <title>Primer-directed sequencing of human papillomavirus types.</title>
        <authorList>
            <person name="Delius H."/>
            <person name="Hofmann B."/>
        </authorList>
    </citation>
    <scope>NUCLEOTIDE SEQUENCE [GENOMIC DNA]</scope>
</reference>
<dbReference type="EMBL" id="X74466">
    <property type="protein sequence ID" value="CAA52501.1"/>
    <property type="molecule type" value="Genomic_DNA"/>
</dbReference>
<dbReference type="PIR" id="S36543">
    <property type="entry name" value="S36543"/>
</dbReference>
<dbReference type="SMR" id="P36733"/>
<dbReference type="Proteomes" id="UP000009106">
    <property type="component" value="Genome"/>
</dbReference>
<dbReference type="GO" id="GO:0042025">
    <property type="term" value="C:host cell nucleus"/>
    <property type="evidence" value="ECO:0007669"/>
    <property type="project" value="UniProtKB-SubCell"/>
</dbReference>
<dbReference type="GO" id="GO:0039620">
    <property type="term" value="C:T=7 icosahedral viral capsid"/>
    <property type="evidence" value="ECO:0007669"/>
    <property type="project" value="UniProtKB-UniRule"/>
</dbReference>
<dbReference type="GO" id="GO:0005198">
    <property type="term" value="F:structural molecule activity"/>
    <property type="evidence" value="ECO:0007669"/>
    <property type="project" value="UniProtKB-UniRule"/>
</dbReference>
<dbReference type="GO" id="GO:0075509">
    <property type="term" value="P:endocytosis involved in viral entry into host cell"/>
    <property type="evidence" value="ECO:0007669"/>
    <property type="project" value="UniProtKB-KW"/>
</dbReference>
<dbReference type="GO" id="GO:0019062">
    <property type="term" value="P:virion attachment to host cell"/>
    <property type="evidence" value="ECO:0007669"/>
    <property type="project" value="UniProtKB-UniRule"/>
</dbReference>
<dbReference type="Gene3D" id="2.60.175.20">
    <property type="entry name" value="Major capsid L1 (late) superfamily, Papillomavirus"/>
    <property type="match status" value="2"/>
</dbReference>
<dbReference type="HAMAP" id="MF_04002">
    <property type="entry name" value="PPV_L1"/>
    <property type="match status" value="1"/>
</dbReference>
<dbReference type="InterPro" id="IPR002210">
    <property type="entry name" value="Capsid_L1_Papillomavir"/>
</dbReference>
<dbReference type="InterPro" id="IPR036973">
    <property type="entry name" value="Capsid_L1_sf_Papillomavir"/>
</dbReference>
<dbReference type="InterPro" id="IPR011222">
    <property type="entry name" value="dsDNA_vir_gr_I_capsid"/>
</dbReference>
<dbReference type="Pfam" id="PF00500">
    <property type="entry name" value="Late_protein_L1"/>
    <property type="match status" value="1"/>
</dbReference>
<dbReference type="PRINTS" id="PR00865">
    <property type="entry name" value="HPVCAPSIDL1"/>
</dbReference>
<dbReference type="SUPFAM" id="SSF88648">
    <property type="entry name" value="Group I dsDNA viruses"/>
    <property type="match status" value="1"/>
</dbReference>
<accession>P36733</accession>
<gene>
    <name evidence="1" type="primary">L1</name>
</gene>
<protein>
    <recommendedName>
        <fullName evidence="1">Major capsid protein L1</fullName>
    </recommendedName>
</protein>
<comment type="function">
    <text evidence="1">Forms an icosahedral capsid with a T=7 symmetry and a 50 nm diameter. The capsid is composed of 72 pentamers linked to each other by disulfide bonds and associated with L2 proteins. Binds to heparan sulfate proteoglycans on cell surface of basal layer keratinocytes to provide initial virion attachment. This binding mediates a conformational change in the virus capsid that facilitates efficient infection. The virion enters the host cell via endocytosis. During virus trafficking, L1 protein dissociates from the viral DNA and the genomic DNA is released to the host nucleus. The virion assembly takes place within the cell nucleus. Encapsulates the genomic DNA together with protein L2.</text>
</comment>
<comment type="subunit">
    <text evidence="1">Self-assembles into homopentamers. The capsid has an icosahedral symmetry and consists of 72 capsomers, with each capsomer being a pentamer of L1. Interacts with the minor capsid protein L2; this interaction is necessary for viral genome encapsidation. Interacts with protein E2; this interaction enhances E2-dependent replication and transcription activation.</text>
</comment>
<comment type="subcellular location">
    <subcellularLocation>
        <location evidence="1">Virion</location>
    </subcellularLocation>
    <subcellularLocation>
        <location evidence="1">Host nucleus</location>
    </subcellularLocation>
</comment>
<comment type="similarity">
    <text evidence="1">Belongs to the papillomaviridae L1 protein family.</text>
</comment>
<keyword id="KW-0167">Capsid protein</keyword>
<keyword id="KW-1015">Disulfide bond</keyword>
<keyword id="KW-1048">Host nucleus</keyword>
<keyword id="KW-0945">Host-virus interaction</keyword>
<keyword id="KW-0426">Late protein</keyword>
<keyword id="KW-1145">T=7 icosahedral capsid protein</keyword>
<keyword id="KW-1161">Viral attachment to host cell</keyword>
<keyword id="KW-1162">Viral penetration into host cytoplasm</keyword>
<keyword id="KW-0946">Virion</keyword>
<keyword id="KW-1164">Virus endocytosis by host</keyword>
<keyword id="KW-1160">Virus entry into host cell</keyword>
<evidence type="ECO:0000255" key="1">
    <source>
        <dbReference type="HAMAP-Rule" id="MF_04002"/>
    </source>
</evidence>
<evidence type="ECO:0000256" key="2">
    <source>
        <dbReference type="SAM" id="MobiDB-lite"/>
    </source>
</evidence>